<name>RISB_EXIS2</name>
<comment type="function">
    <text evidence="1">Catalyzes the formation of 6,7-dimethyl-8-ribityllumazine by condensation of 5-amino-6-(D-ribitylamino)uracil with 3,4-dihydroxy-2-butanone 4-phosphate. This is the penultimate step in the biosynthesis of riboflavin.</text>
</comment>
<comment type="catalytic activity">
    <reaction evidence="1">
        <text>(2S)-2-hydroxy-3-oxobutyl phosphate + 5-amino-6-(D-ribitylamino)uracil = 6,7-dimethyl-8-(1-D-ribityl)lumazine + phosphate + 2 H2O + H(+)</text>
        <dbReference type="Rhea" id="RHEA:26152"/>
        <dbReference type="ChEBI" id="CHEBI:15377"/>
        <dbReference type="ChEBI" id="CHEBI:15378"/>
        <dbReference type="ChEBI" id="CHEBI:15934"/>
        <dbReference type="ChEBI" id="CHEBI:43474"/>
        <dbReference type="ChEBI" id="CHEBI:58201"/>
        <dbReference type="ChEBI" id="CHEBI:58830"/>
        <dbReference type="EC" id="2.5.1.78"/>
    </reaction>
</comment>
<comment type="pathway">
    <text evidence="1">Cofactor biosynthesis; riboflavin biosynthesis; riboflavin from 2-hydroxy-3-oxobutyl phosphate and 5-amino-6-(D-ribitylamino)uracil: step 1/2.</text>
</comment>
<comment type="subunit">
    <text evidence="1">Forms an icosahedral capsid composed of 60 subunits, arranged as a dodecamer of pentamers.</text>
</comment>
<comment type="similarity">
    <text evidence="1">Belongs to the DMRL synthase family.</text>
</comment>
<evidence type="ECO:0000255" key="1">
    <source>
        <dbReference type="HAMAP-Rule" id="MF_00178"/>
    </source>
</evidence>
<keyword id="KW-1185">Reference proteome</keyword>
<keyword id="KW-0686">Riboflavin biosynthesis</keyword>
<keyword id="KW-0808">Transferase</keyword>
<accession>B1YEJ3</accession>
<organism>
    <name type="scientific">Exiguobacterium sibiricum (strain DSM 17290 / CCUG 55495 / CIP 109462 / JCM 13490 / 255-15)</name>
    <dbReference type="NCBI Taxonomy" id="262543"/>
    <lineage>
        <taxon>Bacteria</taxon>
        <taxon>Bacillati</taxon>
        <taxon>Bacillota</taxon>
        <taxon>Bacilli</taxon>
        <taxon>Bacillales</taxon>
        <taxon>Bacillales Family XII. Incertae Sedis</taxon>
        <taxon>Exiguobacterium</taxon>
    </lineage>
</organism>
<dbReference type="EC" id="2.5.1.78" evidence="1"/>
<dbReference type="EMBL" id="CP001022">
    <property type="protein sequence ID" value="ACB62161.1"/>
    <property type="molecule type" value="Genomic_DNA"/>
</dbReference>
<dbReference type="SMR" id="B1YEJ3"/>
<dbReference type="STRING" id="262543.Exig_2713"/>
<dbReference type="KEGG" id="esi:Exig_2713"/>
<dbReference type="eggNOG" id="COG0054">
    <property type="taxonomic scope" value="Bacteria"/>
</dbReference>
<dbReference type="HOGENOM" id="CLU_089358_1_1_9"/>
<dbReference type="OrthoDB" id="9809709at2"/>
<dbReference type="UniPathway" id="UPA00275">
    <property type="reaction ID" value="UER00404"/>
</dbReference>
<dbReference type="Proteomes" id="UP000001681">
    <property type="component" value="Chromosome"/>
</dbReference>
<dbReference type="GO" id="GO:0005829">
    <property type="term" value="C:cytosol"/>
    <property type="evidence" value="ECO:0007669"/>
    <property type="project" value="TreeGrafter"/>
</dbReference>
<dbReference type="GO" id="GO:0009349">
    <property type="term" value="C:riboflavin synthase complex"/>
    <property type="evidence" value="ECO:0007669"/>
    <property type="project" value="InterPro"/>
</dbReference>
<dbReference type="GO" id="GO:0000906">
    <property type="term" value="F:6,7-dimethyl-8-ribityllumazine synthase activity"/>
    <property type="evidence" value="ECO:0007669"/>
    <property type="project" value="UniProtKB-UniRule"/>
</dbReference>
<dbReference type="GO" id="GO:0009231">
    <property type="term" value="P:riboflavin biosynthetic process"/>
    <property type="evidence" value="ECO:0007669"/>
    <property type="project" value="UniProtKB-UniRule"/>
</dbReference>
<dbReference type="CDD" id="cd09209">
    <property type="entry name" value="Lumazine_synthase-I"/>
    <property type="match status" value="1"/>
</dbReference>
<dbReference type="FunFam" id="3.40.50.960:FF:000001">
    <property type="entry name" value="6,7-dimethyl-8-ribityllumazine synthase"/>
    <property type="match status" value="1"/>
</dbReference>
<dbReference type="Gene3D" id="3.40.50.960">
    <property type="entry name" value="Lumazine/riboflavin synthase"/>
    <property type="match status" value="1"/>
</dbReference>
<dbReference type="HAMAP" id="MF_00178">
    <property type="entry name" value="Lumazine_synth"/>
    <property type="match status" value="1"/>
</dbReference>
<dbReference type="InterPro" id="IPR034964">
    <property type="entry name" value="LS"/>
</dbReference>
<dbReference type="InterPro" id="IPR002180">
    <property type="entry name" value="LS/RS"/>
</dbReference>
<dbReference type="InterPro" id="IPR036467">
    <property type="entry name" value="LS/RS_sf"/>
</dbReference>
<dbReference type="NCBIfam" id="TIGR00114">
    <property type="entry name" value="lumazine-synth"/>
    <property type="match status" value="1"/>
</dbReference>
<dbReference type="NCBIfam" id="NF000812">
    <property type="entry name" value="PRK00061.1-4"/>
    <property type="match status" value="1"/>
</dbReference>
<dbReference type="PANTHER" id="PTHR21058:SF0">
    <property type="entry name" value="6,7-DIMETHYL-8-RIBITYLLUMAZINE SYNTHASE"/>
    <property type="match status" value="1"/>
</dbReference>
<dbReference type="PANTHER" id="PTHR21058">
    <property type="entry name" value="6,7-DIMETHYL-8-RIBITYLLUMAZINE SYNTHASE DMRL SYNTHASE LUMAZINE SYNTHASE"/>
    <property type="match status" value="1"/>
</dbReference>
<dbReference type="Pfam" id="PF00885">
    <property type="entry name" value="DMRL_synthase"/>
    <property type="match status" value="1"/>
</dbReference>
<dbReference type="SUPFAM" id="SSF52121">
    <property type="entry name" value="Lumazine synthase"/>
    <property type="match status" value="1"/>
</dbReference>
<sequence length="152" mass="15842">MVFEGFLTGEGLRVAIVAARFNELITSKLVGGANDAFRRHGVAADAVDTAWVPGAFEIPLVAEKLAKSGNYDAVITLGAVIRGATSHYDYVCNEVAKGVAGASRETGVPIIFGVLTTDSIEQAVERAGTKAGNKGYEAAVSAIEMANLLRTI</sequence>
<gene>
    <name evidence="1" type="primary">ribH</name>
    <name type="ordered locus">Exig_2713</name>
</gene>
<proteinExistence type="inferred from homology"/>
<protein>
    <recommendedName>
        <fullName evidence="1">6,7-dimethyl-8-ribityllumazine synthase</fullName>
        <shortName evidence="1">DMRL synthase</shortName>
        <shortName evidence="1">LS</shortName>
        <shortName evidence="1">Lumazine synthase</shortName>
        <ecNumber evidence="1">2.5.1.78</ecNumber>
    </recommendedName>
</protein>
<feature type="chain" id="PRO_1000098192" description="6,7-dimethyl-8-ribityllumazine synthase">
    <location>
        <begin position="1"/>
        <end position="152"/>
    </location>
</feature>
<feature type="active site" description="Proton donor" evidence="1">
    <location>
        <position position="87"/>
    </location>
</feature>
<feature type="binding site" evidence="1">
    <location>
        <position position="21"/>
    </location>
    <ligand>
        <name>5-amino-6-(D-ribitylamino)uracil</name>
        <dbReference type="ChEBI" id="CHEBI:15934"/>
    </ligand>
</feature>
<feature type="binding site" evidence="1">
    <location>
        <begin position="55"/>
        <end position="57"/>
    </location>
    <ligand>
        <name>5-amino-6-(D-ribitylamino)uracil</name>
        <dbReference type="ChEBI" id="CHEBI:15934"/>
    </ligand>
</feature>
<feature type="binding site" evidence="1">
    <location>
        <begin position="79"/>
        <end position="81"/>
    </location>
    <ligand>
        <name>5-amino-6-(D-ribitylamino)uracil</name>
        <dbReference type="ChEBI" id="CHEBI:15934"/>
    </ligand>
</feature>
<feature type="binding site" evidence="1">
    <location>
        <begin position="84"/>
        <end position="85"/>
    </location>
    <ligand>
        <name>(2S)-2-hydroxy-3-oxobutyl phosphate</name>
        <dbReference type="ChEBI" id="CHEBI:58830"/>
    </ligand>
</feature>
<feature type="binding site" evidence="1">
    <location>
        <position position="112"/>
    </location>
    <ligand>
        <name>5-amino-6-(D-ribitylamino)uracil</name>
        <dbReference type="ChEBI" id="CHEBI:15934"/>
    </ligand>
</feature>
<feature type="binding site" evidence="1">
    <location>
        <position position="126"/>
    </location>
    <ligand>
        <name>(2S)-2-hydroxy-3-oxobutyl phosphate</name>
        <dbReference type="ChEBI" id="CHEBI:58830"/>
    </ligand>
</feature>
<reference key="1">
    <citation type="submission" date="2008-04" db="EMBL/GenBank/DDBJ databases">
        <title>Complete sequence of chromosome of Exiguobacterium sibiricum 255-15.</title>
        <authorList>
            <consortium name="US DOE Joint Genome Institute"/>
            <person name="Copeland A."/>
            <person name="Lucas S."/>
            <person name="Lapidus A."/>
            <person name="Glavina del Rio T."/>
            <person name="Dalin E."/>
            <person name="Tice H."/>
            <person name="Bruce D."/>
            <person name="Goodwin L."/>
            <person name="Pitluck S."/>
            <person name="Kiss H."/>
            <person name="Chertkov O."/>
            <person name="Monk C."/>
            <person name="Brettin T."/>
            <person name="Detter J.C."/>
            <person name="Han C."/>
            <person name="Kuske C.R."/>
            <person name="Schmutz J."/>
            <person name="Larimer F."/>
            <person name="Land M."/>
            <person name="Hauser L."/>
            <person name="Kyrpides N."/>
            <person name="Mikhailova N."/>
            <person name="Vishnivetskaya T."/>
            <person name="Rodrigues D.F."/>
            <person name="Gilichinsky D."/>
            <person name="Tiedje J."/>
            <person name="Richardson P."/>
        </authorList>
    </citation>
    <scope>NUCLEOTIDE SEQUENCE [LARGE SCALE GENOMIC DNA]</scope>
    <source>
        <strain>DSM 17290 / CCUG 55495 / CIP 109462 / JCM 13490 / 255-15</strain>
    </source>
</reference>